<proteinExistence type="inferred from homology"/>
<name>AACC8_STRFR</name>
<feature type="chain" id="PRO_0000068550" description="Aminoglycoside N(3)-acetyltransferase VIII">
    <location>
        <begin position="1"/>
        <end position="286"/>
    </location>
</feature>
<organism>
    <name type="scientific">Streptomyces fradiae</name>
    <name type="common">Streptomyces roseoflavus</name>
    <dbReference type="NCBI Taxonomy" id="1906"/>
    <lineage>
        <taxon>Bacteria</taxon>
        <taxon>Bacillati</taxon>
        <taxon>Actinomycetota</taxon>
        <taxon>Actinomycetes</taxon>
        <taxon>Kitasatosporales</taxon>
        <taxon>Streptomycetaceae</taxon>
        <taxon>Streptomyces</taxon>
    </lineage>
</organism>
<gene>
    <name type="primary">aacC8</name>
</gene>
<sequence>MDEKELIERAGGPVTRGRLVRDLEALGVGAGDTVMVHTRMSAIGYVVGGPQTVIDAVRDAVGADGTLMAYCGWNDAPPYDLAEWPPAWREAARAEWPAYDPLLSEADRGNGRVPEALRHQPGAVRSRHPDASFVAVGPAAHPLMDDHPWDDPHGPDSPLARLAGAGGRVLLLGAPLDTLTLLHHAEARAEAPGKRFVAYEQPVTVGGRRVWRRFRDVDTSRGVPYGRVVPEGVVPFTVIAQDMLAAGIGRTGRVAAAPVHLFEAADVVRFGVEWIESRMGGAAGGA</sequence>
<accession>P29809</accession>
<comment type="function">
    <text>Resistance to neomycin.</text>
</comment>
<comment type="catalytic activity">
    <reaction>
        <text>a 2-deoxystreptamine antibiotic + acetyl-CoA = an N(3)-acetyl-2-deoxystreptamine antibiotic + CoA + H(+)</text>
        <dbReference type="Rhea" id="RHEA:12665"/>
        <dbReference type="ChEBI" id="CHEBI:15378"/>
        <dbReference type="ChEBI" id="CHEBI:57287"/>
        <dbReference type="ChEBI" id="CHEBI:57288"/>
        <dbReference type="ChEBI" id="CHEBI:57921"/>
        <dbReference type="ChEBI" id="CHEBI:77452"/>
        <dbReference type="EC" id="2.3.1.81"/>
    </reaction>
</comment>
<comment type="similarity">
    <text evidence="1">Belongs to the antibiotic N-acetyltransferase family.</text>
</comment>
<evidence type="ECO:0000305" key="1"/>
<dbReference type="EC" id="2.3.1.81"/>
<dbReference type="EMBL" id="M55426">
    <property type="protein sequence ID" value="AAA26685.1"/>
    <property type="molecule type" value="Genomic_DNA"/>
</dbReference>
<dbReference type="PIR" id="JE0417">
    <property type="entry name" value="JE0417"/>
</dbReference>
<dbReference type="RefSeq" id="WP_063856943.1">
    <property type="nucleotide sequence ID" value="NG_048574.1"/>
</dbReference>
<dbReference type="SMR" id="P29809"/>
<dbReference type="CARD" id="ARO:3002542">
    <property type="molecule name" value="AAC(3)-VIIIa"/>
    <property type="mechanism identifier" value="ARO:0001004"/>
    <property type="mechanism name" value="antibiotic inactivation"/>
</dbReference>
<dbReference type="KEGG" id="ag:AAA26685"/>
<dbReference type="GO" id="GO:0046353">
    <property type="term" value="F:aminoglycoside 3-N-acetyltransferase activity"/>
    <property type="evidence" value="ECO:0007669"/>
    <property type="project" value="UniProtKB-EC"/>
</dbReference>
<dbReference type="GO" id="GO:0046677">
    <property type="term" value="P:response to antibiotic"/>
    <property type="evidence" value="ECO:0007669"/>
    <property type="project" value="UniProtKB-KW"/>
</dbReference>
<dbReference type="InterPro" id="IPR003679">
    <property type="entry name" value="Amioglycoside_AcTrfase"/>
</dbReference>
<dbReference type="InterPro" id="IPR028345">
    <property type="entry name" value="Antibiotic_NAT-like"/>
</dbReference>
<dbReference type="NCBIfam" id="NF033082">
    <property type="entry name" value="AAC_3"/>
    <property type="match status" value="1"/>
</dbReference>
<dbReference type="NCBIfam" id="NF033180">
    <property type="entry name" value="AAC_3_VIII"/>
    <property type="match status" value="1"/>
</dbReference>
<dbReference type="PANTHER" id="PTHR11104">
    <property type="entry name" value="AMINOGLYCOSIDE N3-ACETYLTRANSFERASE"/>
    <property type="match status" value="1"/>
</dbReference>
<dbReference type="PANTHER" id="PTHR11104:SF0">
    <property type="entry name" value="SPBETA PROPHAGE-DERIVED AMINOGLYCOSIDE N(3')-ACETYLTRANSFERASE-LIKE PROTEIN YOKD"/>
    <property type="match status" value="1"/>
</dbReference>
<dbReference type="Pfam" id="PF02522">
    <property type="entry name" value="Antibiotic_NAT"/>
    <property type="match status" value="1"/>
</dbReference>
<dbReference type="SUPFAM" id="SSF110710">
    <property type="entry name" value="TTHA0583/YokD-like"/>
    <property type="match status" value="1"/>
</dbReference>
<protein>
    <recommendedName>
        <fullName>Aminoglycoside N(3)-acetyltransferase VIII</fullName>
        <ecNumber>2.3.1.81</ecNumber>
    </recommendedName>
    <alternativeName>
        <fullName>ACC(3)-VIII</fullName>
    </alternativeName>
    <alternativeName>
        <fullName>Aminocyclitol 3-N-acetyltransferase type VIII</fullName>
    </alternativeName>
</protein>
<keyword id="KW-0012">Acyltransferase</keyword>
<keyword id="KW-0046">Antibiotic resistance</keyword>
<keyword id="KW-0808">Transferase</keyword>
<reference key="1">
    <citation type="journal article" date="1991" name="Gene">
        <title>Characterisation of aminoglycoside acetyltransferase-encoding genes of neomycin-producing Micromonospora chalcea and Streptomyces fradiae.</title>
        <authorList>
            <person name="Salauze D."/>
            <person name="Perez-Gonzalez J.A."/>
            <person name="Piepersberg W."/>
            <person name="Davies J."/>
        </authorList>
    </citation>
    <scope>NUCLEOTIDE SEQUENCE [GENOMIC DNA]</scope>
</reference>